<evidence type="ECO:0000255" key="1">
    <source>
        <dbReference type="HAMAP-Rule" id="MF_01710"/>
    </source>
</evidence>
<reference key="1">
    <citation type="journal article" date="2004" name="Genome Res.">
        <title>The complete genome and proteome of Mycoplasma mobile.</title>
        <authorList>
            <person name="Jaffe J.D."/>
            <person name="Stange-Thomann N."/>
            <person name="Smith C."/>
            <person name="DeCaprio D."/>
            <person name="Fisher S."/>
            <person name="Butler J."/>
            <person name="Calvo S."/>
            <person name="Elkins T."/>
            <person name="FitzGerald M.G."/>
            <person name="Hafez N."/>
            <person name="Kodira C.D."/>
            <person name="Major J."/>
            <person name="Wang S."/>
            <person name="Wilkinson J."/>
            <person name="Nicol R."/>
            <person name="Nusbaum C."/>
            <person name="Birren B."/>
            <person name="Berg H.C."/>
            <person name="Church G.M."/>
        </authorList>
    </citation>
    <scope>NUCLEOTIDE SEQUENCE [LARGE SCALE GENOMIC DNA]</scope>
    <source>
        <strain>ATCC 43663 / NCTC 11711 / 163 K</strain>
    </source>
</reference>
<organism>
    <name type="scientific">Mycoplasma mobile (strain ATCC 43663 / 163K / NCTC 11711)</name>
    <name type="common">Mesomycoplasma mobile</name>
    <dbReference type="NCBI Taxonomy" id="267748"/>
    <lineage>
        <taxon>Bacteria</taxon>
        <taxon>Bacillati</taxon>
        <taxon>Mycoplasmatota</taxon>
        <taxon>Mycoplasmoidales</taxon>
        <taxon>Metamycoplasmataceae</taxon>
        <taxon>Mesomycoplasma</taxon>
    </lineage>
</organism>
<dbReference type="EC" id="7.-.-.-" evidence="1"/>
<dbReference type="EMBL" id="AE017308">
    <property type="protein sequence ID" value="AAT27919.1"/>
    <property type="molecule type" value="Genomic_DNA"/>
</dbReference>
<dbReference type="SMR" id="Q6KHL1"/>
<dbReference type="STRING" id="267748.MMOB4330"/>
<dbReference type="KEGG" id="mmo:MMOB4330"/>
<dbReference type="eggNOG" id="COG1122">
    <property type="taxonomic scope" value="Bacteria"/>
</dbReference>
<dbReference type="HOGENOM" id="CLU_000604_1_22_14"/>
<dbReference type="Proteomes" id="UP000009072">
    <property type="component" value="Chromosome"/>
</dbReference>
<dbReference type="GO" id="GO:0043190">
    <property type="term" value="C:ATP-binding cassette (ABC) transporter complex"/>
    <property type="evidence" value="ECO:0007669"/>
    <property type="project" value="TreeGrafter"/>
</dbReference>
<dbReference type="GO" id="GO:0005524">
    <property type="term" value="F:ATP binding"/>
    <property type="evidence" value="ECO:0007669"/>
    <property type="project" value="UniProtKB-KW"/>
</dbReference>
<dbReference type="GO" id="GO:0016887">
    <property type="term" value="F:ATP hydrolysis activity"/>
    <property type="evidence" value="ECO:0007669"/>
    <property type="project" value="InterPro"/>
</dbReference>
<dbReference type="GO" id="GO:0042626">
    <property type="term" value="F:ATPase-coupled transmembrane transporter activity"/>
    <property type="evidence" value="ECO:0007669"/>
    <property type="project" value="TreeGrafter"/>
</dbReference>
<dbReference type="CDD" id="cd03225">
    <property type="entry name" value="ABC_cobalt_CbiO_domain1"/>
    <property type="match status" value="1"/>
</dbReference>
<dbReference type="FunFam" id="3.40.50.300:FF:000224">
    <property type="entry name" value="Energy-coupling factor transporter ATP-binding protein EcfA"/>
    <property type="match status" value="1"/>
</dbReference>
<dbReference type="Gene3D" id="3.40.50.300">
    <property type="entry name" value="P-loop containing nucleotide triphosphate hydrolases"/>
    <property type="match status" value="1"/>
</dbReference>
<dbReference type="InterPro" id="IPR003593">
    <property type="entry name" value="AAA+_ATPase"/>
</dbReference>
<dbReference type="InterPro" id="IPR003439">
    <property type="entry name" value="ABC_transporter-like_ATP-bd"/>
</dbReference>
<dbReference type="InterPro" id="IPR017871">
    <property type="entry name" value="ABC_transporter-like_CS"/>
</dbReference>
<dbReference type="InterPro" id="IPR015856">
    <property type="entry name" value="ABC_transpr_CbiO/EcfA_su"/>
</dbReference>
<dbReference type="InterPro" id="IPR050095">
    <property type="entry name" value="ECF_ABC_transporter_ATP-bd"/>
</dbReference>
<dbReference type="InterPro" id="IPR030947">
    <property type="entry name" value="EcfA_1"/>
</dbReference>
<dbReference type="InterPro" id="IPR027417">
    <property type="entry name" value="P-loop_NTPase"/>
</dbReference>
<dbReference type="NCBIfam" id="TIGR04520">
    <property type="entry name" value="ECF_ATPase_1"/>
    <property type="match status" value="1"/>
</dbReference>
<dbReference type="NCBIfam" id="NF010167">
    <property type="entry name" value="PRK13648.1"/>
    <property type="match status" value="1"/>
</dbReference>
<dbReference type="PANTHER" id="PTHR43553:SF24">
    <property type="entry name" value="ENERGY-COUPLING FACTOR TRANSPORTER ATP-BINDING PROTEIN ECFA1"/>
    <property type="match status" value="1"/>
</dbReference>
<dbReference type="PANTHER" id="PTHR43553">
    <property type="entry name" value="HEAVY METAL TRANSPORTER"/>
    <property type="match status" value="1"/>
</dbReference>
<dbReference type="Pfam" id="PF00005">
    <property type="entry name" value="ABC_tran"/>
    <property type="match status" value="1"/>
</dbReference>
<dbReference type="SMART" id="SM00382">
    <property type="entry name" value="AAA"/>
    <property type="match status" value="1"/>
</dbReference>
<dbReference type="SUPFAM" id="SSF52540">
    <property type="entry name" value="P-loop containing nucleoside triphosphate hydrolases"/>
    <property type="match status" value="1"/>
</dbReference>
<dbReference type="PROSITE" id="PS00211">
    <property type="entry name" value="ABC_TRANSPORTER_1"/>
    <property type="match status" value="1"/>
</dbReference>
<dbReference type="PROSITE" id="PS50893">
    <property type="entry name" value="ABC_TRANSPORTER_2"/>
    <property type="match status" value="1"/>
</dbReference>
<dbReference type="PROSITE" id="PS51246">
    <property type="entry name" value="CBIO"/>
    <property type="match status" value="1"/>
</dbReference>
<proteinExistence type="inferred from homology"/>
<comment type="function">
    <text evidence="1">ATP-binding (A) component of a common energy-coupling factor (ECF) ABC-transporter complex. Unlike classic ABC transporters this ECF transporter provides the energy necessary to transport a number of different substrates.</text>
</comment>
<comment type="subunit">
    <text evidence="1">Forms a stable energy-coupling factor (ECF) transporter complex composed of 2 membrane-embedded substrate-binding proteins (S component), 2 ATP-binding proteins (A component) and 2 transmembrane proteins (T component).</text>
</comment>
<comment type="subcellular location">
    <subcellularLocation>
        <location evidence="1">Cell membrane</location>
        <topology evidence="1">Peripheral membrane protein</topology>
    </subcellularLocation>
</comment>
<comment type="similarity">
    <text evidence="1">Belongs to the ABC transporter superfamily. Energy-coupling factor EcfA family.</text>
</comment>
<gene>
    <name evidence="1" type="primary">ecfA1</name>
    <name type="synonym">cbiO1</name>
    <name type="ordered locus">MMOB4330</name>
</gene>
<keyword id="KW-0067">ATP-binding</keyword>
<keyword id="KW-1003">Cell membrane</keyword>
<keyword id="KW-0472">Membrane</keyword>
<keyword id="KW-0547">Nucleotide-binding</keyword>
<keyword id="KW-1185">Reference proteome</keyword>
<keyword id="KW-1278">Translocase</keyword>
<keyword id="KW-0813">Transport</keyword>
<accession>Q6KHL1</accession>
<sequence>MSTDNINTPMIELKNVKFKYSTGTSFALNDVSINFPQGKYTAILGHNGSGKSTLSKIIAGLYKPTSGDVYIDGIKLQRSTLRKLQEKIGIIFQNPDNQFIGATVEDDIAFGLENKLIPRNEMKKIILDLSKRVGMDKYLDREPQYLSGGQKQRVAIASILALDPEIIIFDEVTSMLDPKGKKEVLKLIREIQQTRKKTLISITHDMDEAILADRVLVLAEGELIASGDPLEILKNERVIEIAKIDSPFIYRVSKLLKNVDPTYDQDKLIGEICK</sequence>
<feature type="chain" id="PRO_0000092041" description="Energy-coupling factor transporter ATP-binding protein EcfA1">
    <location>
        <begin position="1"/>
        <end position="274"/>
    </location>
</feature>
<feature type="domain" description="ABC transporter" evidence="1">
    <location>
        <begin position="11"/>
        <end position="245"/>
    </location>
</feature>
<feature type="binding site" evidence="1">
    <location>
        <begin position="45"/>
        <end position="52"/>
    </location>
    <ligand>
        <name>ATP</name>
        <dbReference type="ChEBI" id="CHEBI:30616"/>
    </ligand>
</feature>
<name>ECFA1_MYCM1</name>
<protein>
    <recommendedName>
        <fullName evidence="1">Energy-coupling factor transporter ATP-binding protein EcfA1</fullName>
        <shortName evidence="1">ECF transporter A component EcfA1</shortName>
        <ecNumber evidence="1">7.-.-.-</ecNumber>
    </recommendedName>
</protein>